<organism>
    <name type="scientific">Citrobacter koseri (strain ATCC BAA-895 / CDC 4225-83 / SGSC4696)</name>
    <dbReference type="NCBI Taxonomy" id="290338"/>
    <lineage>
        <taxon>Bacteria</taxon>
        <taxon>Pseudomonadati</taxon>
        <taxon>Pseudomonadota</taxon>
        <taxon>Gammaproteobacteria</taxon>
        <taxon>Enterobacterales</taxon>
        <taxon>Enterobacteriaceae</taxon>
        <taxon>Citrobacter</taxon>
    </lineage>
</organism>
<accession>A8AQ56</accession>
<gene>
    <name evidence="1" type="primary">rbfA</name>
    <name type="ordered locus">CKO_04566</name>
</gene>
<name>RBFA_CITK8</name>
<protein>
    <recommendedName>
        <fullName evidence="1">Ribosome-binding factor A</fullName>
    </recommendedName>
</protein>
<comment type="function">
    <text evidence="1">One of several proteins that assist in the late maturation steps of the functional core of the 30S ribosomal subunit. Associates with free 30S ribosomal subunits (but not with 30S subunits that are part of 70S ribosomes or polysomes). Required for efficient processing of 16S rRNA. May interact with the 5'-terminal helix region of 16S rRNA.</text>
</comment>
<comment type="subunit">
    <text evidence="1">Monomer. Binds 30S ribosomal subunits, but not 50S ribosomal subunits or 70S ribosomes.</text>
</comment>
<comment type="subcellular location">
    <subcellularLocation>
        <location evidence="1">Cytoplasm</location>
    </subcellularLocation>
</comment>
<comment type="similarity">
    <text evidence="1">Belongs to the RbfA family.</text>
</comment>
<sequence length="133" mass="15196">MAKEFGRPQRVAQEMQKEIAIILQREIKDPRLGMMTTVSGVEMSRDLAYAKVYVTFLNDKDEDAVKAGIKALQEASGFIRTLLGKAMRLRIVPELTFFYDNSLVEGMRMSNLVTNVVKHDEERRVNPDDSKED</sequence>
<dbReference type="EMBL" id="CP000822">
    <property type="protein sequence ID" value="ABV15619.1"/>
    <property type="molecule type" value="Genomic_DNA"/>
</dbReference>
<dbReference type="RefSeq" id="WP_001040203.1">
    <property type="nucleotide sequence ID" value="NC_009792.1"/>
</dbReference>
<dbReference type="BMRB" id="A8AQ56"/>
<dbReference type="SMR" id="A8AQ56"/>
<dbReference type="STRING" id="290338.CKO_04566"/>
<dbReference type="GeneID" id="66757625"/>
<dbReference type="KEGG" id="cko:CKO_04566"/>
<dbReference type="HOGENOM" id="CLU_089475_5_0_6"/>
<dbReference type="OrthoDB" id="307788at2"/>
<dbReference type="Proteomes" id="UP000008148">
    <property type="component" value="Chromosome"/>
</dbReference>
<dbReference type="GO" id="GO:0005829">
    <property type="term" value="C:cytosol"/>
    <property type="evidence" value="ECO:0007669"/>
    <property type="project" value="TreeGrafter"/>
</dbReference>
<dbReference type="GO" id="GO:0043024">
    <property type="term" value="F:ribosomal small subunit binding"/>
    <property type="evidence" value="ECO:0007669"/>
    <property type="project" value="TreeGrafter"/>
</dbReference>
<dbReference type="GO" id="GO:0030490">
    <property type="term" value="P:maturation of SSU-rRNA"/>
    <property type="evidence" value="ECO:0007669"/>
    <property type="project" value="UniProtKB-UniRule"/>
</dbReference>
<dbReference type="FunFam" id="3.30.300.20:FF:000007">
    <property type="entry name" value="Ribosome-binding factor A"/>
    <property type="match status" value="1"/>
</dbReference>
<dbReference type="Gene3D" id="3.30.300.20">
    <property type="match status" value="1"/>
</dbReference>
<dbReference type="HAMAP" id="MF_00003">
    <property type="entry name" value="RbfA"/>
    <property type="match status" value="1"/>
</dbReference>
<dbReference type="InterPro" id="IPR015946">
    <property type="entry name" value="KH_dom-like_a/b"/>
</dbReference>
<dbReference type="InterPro" id="IPR000238">
    <property type="entry name" value="RbfA"/>
</dbReference>
<dbReference type="InterPro" id="IPR023799">
    <property type="entry name" value="RbfA_dom_sf"/>
</dbReference>
<dbReference type="InterPro" id="IPR020053">
    <property type="entry name" value="Ribosome-bd_factorA_CS"/>
</dbReference>
<dbReference type="NCBIfam" id="TIGR00082">
    <property type="entry name" value="rbfA"/>
    <property type="match status" value="1"/>
</dbReference>
<dbReference type="PANTHER" id="PTHR33515">
    <property type="entry name" value="RIBOSOME-BINDING FACTOR A, CHLOROPLASTIC-RELATED"/>
    <property type="match status" value="1"/>
</dbReference>
<dbReference type="PANTHER" id="PTHR33515:SF1">
    <property type="entry name" value="RIBOSOME-BINDING FACTOR A, CHLOROPLASTIC-RELATED"/>
    <property type="match status" value="1"/>
</dbReference>
<dbReference type="Pfam" id="PF02033">
    <property type="entry name" value="RBFA"/>
    <property type="match status" value="1"/>
</dbReference>
<dbReference type="SUPFAM" id="SSF89919">
    <property type="entry name" value="Ribosome-binding factor A, RbfA"/>
    <property type="match status" value="1"/>
</dbReference>
<dbReference type="PROSITE" id="PS01319">
    <property type="entry name" value="RBFA"/>
    <property type="match status" value="1"/>
</dbReference>
<proteinExistence type="inferred from homology"/>
<feature type="chain" id="PRO_1000000092" description="Ribosome-binding factor A">
    <location>
        <begin position="1"/>
        <end position="133"/>
    </location>
</feature>
<evidence type="ECO:0000255" key="1">
    <source>
        <dbReference type="HAMAP-Rule" id="MF_00003"/>
    </source>
</evidence>
<keyword id="KW-0963">Cytoplasm</keyword>
<keyword id="KW-1185">Reference proteome</keyword>
<keyword id="KW-0690">Ribosome biogenesis</keyword>
<reference key="1">
    <citation type="submission" date="2007-08" db="EMBL/GenBank/DDBJ databases">
        <authorList>
            <consortium name="The Citrobacter koseri Genome Sequencing Project"/>
            <person name="McClelland M."/>
            <person name="Sanderson E.K."/>
            <person name="Porwollik S."/>
            <person name="Spieth J."/>
            <person name="Clifton W.S."/>
            <person name="Latreille P."/>
            <person name="Courtney L."/>
            <person name="Wang C."/>
            <person name="Pepin K."/>
            <person name="Bhonagiri V."/>
            <person name="Nash W."/>
            <person name="Johnson M."/>
            <person name="Thiruvilangam P."/>
            <person name="Wilson R."/>
        </authorList>
    </citation>
    <scope>NUCLEOTIDE SEQUENCE [LARGE SCALE GENOMIC DNA]</scope>
    <source>
        <strain>ATCC BAA-895 / CDC 4225-83 / SGSC4696</strain>
    </source>
</reference>